<reference key="1">
    <citation type="journal article" date="1997" name="J. Bacteriol.">
        <title>Complete genome sequence of Methanobacterium thermoautotrophicum deltaH: functional analysis and comparative genomics.</title>
        <authorList>
            <person name="Smith D.R."/>
            <person name="Doucette-Stamm L.A."/>
            <person name="Deloughery C."/>
            <person name="Lee H.-M."/>
            <person name="Dubois J."/>
            <person name="Aldredge T."/>
            <person name="Bashirzadeh R."/>
            <person name="Blakely D."/>
            <person name="Cook R."/>
            <person name="Gilbert K."/>
            <person name="Harrison D."/>
            <person name="Hoang L."/>
            <person name="Keagle P."/>
            <person name="Lumm W."/>
            <person name="Pothier B."/>
            <person name="Qiu D."/>
            <person name="Spadafora R."/>
            <person name="Vicare R."/>
            <person name="Wang Y."/>
            <person name="Wierzbowski J."/>
            <person name="Gibson R."/>
            <person name="Jiwani N."/>
            <person name="Caruso A."/>
            <person name="Bush D."/>
            <person name="Safer H."/>
            <person name="Patwell D."/>
            <person name="Prabhakar S."/>
            <person name="McDougall S."/>
            <person name="Shimer G."/>
            <person name="Goyal A."/>
            <person name="Pietrovski S."/>
            <person name="Church G.M."/>
            <person name="Daniels C.J."/>
            <person name="Mao J.-I."/>
            <person name="Rice P."/>
            <person name="Noelling J."/>
            <person name="Reeve J.N."/>
        </authorList>
    </citation>
    <scope>NUCLEOTIDE SEQUENCE [LARGE SCALE GENOMIC DNA]</scope>
    <source>
        <strain>ATCC 29096 / DSM 1053 / JCM 10044 / NBRC 100330 / Delta H</strain>
    </source>
</reference>
<comment type="function">
    <text evidence="1">Catalyzes the conversion of dihydroorotate to orotate with NAD(+) as electron acceptor.</text>
</comment>
<comment type="catalytic activity">
    <reaction>
        <text>(S)-dihydroorotate + NAD(+) = orotate + NADH + H(+)</text>
        <dbReference type="Rhea" id="RHEA:13513"/>
        <dbReference type="ChEBI" id="CHEBI:15378"/>
        <dbReference type="ChEBI" id="CHEBI:30839"/>
        <dbReference type="ChEBI" id="CHEBI:30864"/>
        <dbReference type="ChEBI" id="CHEBI:57540"/>
        <dbReference type="ChEBI" id="CHEBI:57945"/>
        <dbReference type="EC" id="1.3.1.14"/>
    </reaction>
</comment>
<comment type="cofactor">
    <cofactor evidence="1">
        <name>FMN</name>
        <dbReference type="ChEBI" id="CHEBI:58210"/>
    </cofactor>
    <text evidence="1">Binds 1 FMN per subunit.</text>
</comment>
<comment type="pathway">
    <text>Pyrimidine metabolism; UMP biosynthesis via de novo pathway; orotate from (S)-dihydroorotate (NAD(+) route): step 1/1.</text>
</comment>
<comment type="subunit">
    <text evidence="1">Heterotetramer of 2 PyrK and 2 PyrD type B subunits.</text>
</comment>
<comment type="subcellular location">
    <subcellularLocation>
        <location evidence="1">Cytoplasm</location>
    </subcellularLocation>
</comment>
<comment type="similarity">
    <text evidence="2">Belongs to the dihydroorotate dehydrogenase family. Type 1 subfamily.</text>
</comment>
<feature type="chain" id="PRO_0000148411" description="Dihydroorotate dehydrogenase B (NAD(+)), catalytic subunit">
    <location>
        <begin position="1"/>
        <end position="303"/>
    </location>
</feature>
<feature type="active site" description="Nucleophile">
    <location>
        <position position="127"/>
    </location>
</feature>
<feature type="binding site" evidence="1">
    <location>
        <begin position="46"/>
        <end position="47"/>
    </location>
    <ligand>
        <name>FMN</name>
        <dbReference type="ChEBI" id="CHEBI:58210"/>
    </ligand>
</feature>
<feature type="binding site" evidence="1">
    <location>
        <position position="46"/>
    </location>
    <ligand>
        <name>substrate</name>
    </ligand>
</feature>
<feature type="binding site" evidence="1">
    <location>
        <begin position="70"/>
        <end position="74"/>
    </location>
    <ligand>
        <name>substrate</name>
    </ligand>
</feature>
<feature type="binding site" evidence="1">
    <location>
        <position position="124"/>
    </location>
    <ligand>
        <name>FMN</name>
        <dbReference type="ChEBI" id="CHEBI:58210"/>
    </ligand>
</feature>
<feature type="binding site" evidence="1">
    <location>
        <position position="124"/>
    </location>
    <ligand>
        <name>substrate</name>
    </ligand>
</feature>
<feature type="binding site" evidence="1">
    <location>
        <position position="163"/>
    </location>
    <ligand>
        <name>FMN</name>
        <dbReference type="ChEBI" id="CHEBI:58210"/>
    </ligand>
</feature>
<feature type="binding site" evidence="1">
    <location>
        <position position="189"/>
    </location>
    <ligand>
        <name>FMN</name>
        <dbReference type="ChEBI" id="CHEBI:58210"/>
    </ligand>
</feature>
<feature type="binding site" evidence="1">
    <location>
        <begin position="190"/>
        <end position="191"/>
    </location>
    <ligand>
        <name>substrate</name>
    </ligand>
</feature>
<feature type="binding site" evidence="1">
    <location>
        <position position="216"/>
    </location>
    <ligand>
        <name>FMN</name>
        <dbReference type="ChEBI" id="CHEBI:58210"/>
    </ligand>
</feature>
<feature type="binding site" evidence="1">
    <location>
        <begin position="242"/>
        <end position="243"/>
    </location>
    <ligand>
        <name>FMN</name>
        <dbReference type="ChEBI" id="CHEBI:58210"/>
    </ligand>
</feature>
<feature type="binding site" evidence="1">
    <location>
        <begin position="264"/>
        <end position="265"/>
    </location>
    <ligand>
        <name>FMN</name>
        <dbReference type="ChEBI" id="CHEBI:58210"/>
    </ligand>
</feature>
<accession>O27281</accession>
<evidence type="ECO:0000250" key="1"/>
<evidence type="ECO:0000305" key="2"/>
<proteinExistence type="inferred from homology"/>
<dbReference type="EC" id="1.3.1.14"/>
<dbReference type="EMBL" id="AE000666">
    <property type="protein sequence ID" value="AAB85702.1"/>
    <property type="molecule type" value="Genomic_DNA"/>
</dbReference>
<dbReference type="PIR" id="A69029">
    <property type="entry name" value="A69029"/>
</dbReference>
<dbReference type="SMR" id="O27281"/>
<dbReference type="FunCoup" id="O27281">
    <property type="interactions" value="217"/>
</dbReference>
<dbReference type="STRING" id="187420.MTH_1213"/>
<dbReference type="PaxDb" id="187420-MTH_1213"/>
<dbReference type="EnsemblBacteria" id="AAB85702">
    <property type="protein sequence ID" value="AAB85702"/>
    <property type="gene ID" value="MTH_1213"/>
</dbReference>
<dbReference type="KEGG" id="mth:MTH_1213"/>
<dbReference type="PATRIC" id="fig|187420.15.peg.1191"/>
<dbReference type="HOGENOM" id="CLU_042042_0_0_2"/>
<dbReference type="InParanoid" id="O27281"/>
<dbReference type="UniPathway" id="UPA00070">
    <property type="reaction ID" value="UER00945"/>
</dbReference>
<dbReference type="Proteomes" id="UP000005223">
    <property type="component" value="Chromosome"/>
</dbReference>
<dbReference type="GO" id="GO:0005737">
    <property type="term" value="C:cytoplasm"/>
    <property type="evidence" value="ECO:0007669"/>
    <property type="project" value="UniProtKB-SubCell"/>
</dbReference>
<dbReference type="GO" id="GO:0004589">
    <property type="term" value="F:dihydroorotate dehydrogenase (NAD+) activity"/>
    <property type="evidence" value="ECO:0007669"/>
    <property type="project" value="UniProtKB-EC"/>
</dbReference>
<dbReference type="GO" id="GO:0006207">
    <property type="term" value="P:'de novo' pyrimidine nucleobase biosynthetic process"/>
    <property type="evidence" value="ECO:0007669"/>
    <property type="project" value="InterPro"/>
</dbReference>
<dbReference type="GO" id="GO:0044205">
    <property type="term" value="P:'de novo' UMP biosynthetic process"/>
    <property type="evidence" value="ECO:0007669"/>
    <property type="project" value="UniProtKB-UniRule"/>
</dbReference>
<dbReference type="CDD" id="cd04740">
    <property type="entry name" value="DHOD_1B_like"/>
    <property type="match status" value="1"/>
</dbReference>
<dbReference type="FunFam" id="3.20.20.70:FF:000027">
    <property type="entry name" value="Dihydropyrimidine dehydrogenase [NADP(+)]"/>
    <property type="match status" value="1"/>
</dbReference>
<dbReference type="Gene3D" id="3.20.20.70">
    <property type="entry name" value="Aldolase class I"/>
    <property type="match status" value="1"/>
</dbReference>
<dbReference type="HAMAP" id="MF_00224">
    <property type="entry name" value="DHO_dh_type1"/>
    <property type="match status" value="1"/>
</dbReference>
<dbReference type="InterPro" id="IPR013785">
    <property type="entry name" value="Aldolase_TIM"/>
</dbReference>
<dbReference type="InterPro" id="IPR050074">
    <property type="entry name" value="DHO_dehydrogenase"/>
</dbReference>
<dbReference type="InterPro" id="IPR033888">
    <property type="entry name" value="DHOD_1B"/>
</dbReference>
<dbReference type="InterPro" id="IPR024920">
    <property type="entry name" value="Dihydroorotate_DH_1"/>
</dbReference>
<dbReference type="InterPro" id="IPR012135">
    <property type="entry name" value="Dihydroorotate_DH_1_2"/>
</dbReference>
<dbReference type="InterPro" id="IPR005720">
    <property type="entry name" value="Dihydroorotate_DH_cat"/>
</dbReference>
<dbReference type="InterPro" id="IPR001295">
    <property type="entry name" value="Dihydroorotate_DH_CS"/>
</dbReference>
<dbReference type="InterPro" id="IPR049622">
    <property type="entry name" value="Dihydroorotate_DH_I"/>
</dbReference>
<dbReference type="NCBIfam" id="NF005574">
    <property type="entry name" value="PRK07259.1"/>
    <property type="match status" value="1"/>
</dbReference>
<dbReference type="NCBIfam" id="TIGR01037">
    <property type="entry name" value="pyrD_sub1_fam"/>
    <property type="match status" value="1"/>
</dbReference>
<dbReference type="PANTHER" id="PTHR48109:SF1">
    <property type="entry name" value="DIHYDROOROTATE DEHYDROGENASE (FUMARATE)"/>
    <property type="match status" value="1"/>
</dbReference>
<dbReference type="PANTHER" id="PTHR48109">
    <property type="entry name" value="DIHYDROOROTATE DEHYDROGENASE (QUINONE), MITOCHONDRIAL-RELATED"/>
    <property type="match status" value="1"/>
</dbReference>
<dbReference type="Pfam" id="PF01180">
    <property type="entry name" value="DHO_dh"/>
    <property type="match status" value="1"/>
</dbReference>
<dbReference type="PIRSF" id="PIRSF000164">
    <property type="entry name" value="DHO_oxidase"/>
    <property type="match status" value="1"/>
</dbReference>
<dbReference type="SUPFAM" id="SSF51395">
    <property type="entry name" value="FMN-linked oxidoreductases"/>
    <property type="match status" value="1"/>
</dbReference>
<dbReference type="PROSITE" id="PS00911">
    <property type="entry name" value="DHODEHASE_1"/>
    <property type="match status" value="1"/>
</dbReference>
<dbReference type="PROSITE" id="PS00912">
    <property type="entry name" value="DHODEHASE_2"/>
    <property type="match status" value="1"/>
</dbReference>
<gene>
    <name type="primary">pyrD</name>
    <name type="ordered locus">MTH_1213</name>
</gene>
<protein>
    <recommendedName>
        <fullName>Dihydroorotate dehydrogenase B (NAD(+)), catalytic subunit</fullName>
        <shortName>DHOD B</shortName>
        <shortName>DHODase B</shortName>
        <shortName>DHOdehase B</shortName>
        <ecNumber>1.3.1.14</ecNumber>
    </recommendedName>
    <alternativeName>
        <fullName>Dihydroorotate oxidase B</fullName>
    </alternativeName>
    <alternativeName>
        <fullName>Orotate reductase (NADH)</fullName>
    </alternativeName>
</protein>
<sequence length="303" mass="31829">MFFMLETSICNIELRNPTILAAGVMGSMASSLNRIYRGGAGAVVTKSFSLRPNPGYRNPTTVEVTGGVINAIGLSNPGVEAFREELKLVDEEVPLIASVYGASPEEFASAAASVEEYADMIELNVSCPHAMAGCGASIGQDPELTFRVVSAVKDAVDVPISTKLTPNVTDIVEIAGSAEEAGSDALTLINSLGPGMKIDIKTARPILSNAFGGMSGPAIKPVAVRCVYDVYRSVDIPIMGVGGVRDFQDAVEFLFAGARAVQVGTAIMYDGPEVFMKICRGLEAFMMAEGFSSVDEMVGLAHD</sequence>
<name>PYRDB_METTH</name>
<keyword id="KW-0963">Cytoplasm</keyword>
<keyword id="KW-0285">Flavoprotein</keyword>
<keyword id="KW-0288">FMN</keyword>
<keyword id="KW-0520">NAD</keyword>
<keyword id="KW-0560">Oxidoreductase</keyword>
<keyword id="KW-0665">Pyrimidine biosynthesis</keyword>
<keyword id="KW-1185">Reference proteome</keyword>
<organism>
    <name type="scientific">Methanothermobacter thermautotrophicus (strain ATCC 29096 / DSM 1053 / JCM 10044 / NBRC 100330 / Delta H)</name>
    <name type="common">Methanobacterium thermoautotrophicum</name>
    <dbReference type="NCBI Taxonomy" id="187420"/>
    <lineage>
        <taxon>Archaea</taxon>
        <taxon>Methanobacteriati</taxon>
        <taxon>Methanobacteriota</taxon>
        <taxon>Methanomada group</taxon>
        <taxon>Methanobacteria</taxon>
        <taxon>Methanobacteriales</taxon>
        <taxon>Methanobacteriaceae</taxon>
        <taxon>Methanothermobacter</taxon>
    </lineage>
</organism>